<organism>
    <name type="scientific">Caldicellulosiruptor saccharolyticus (strain ATCC 43494 / DSM 8903 / Tp8T 6331)</name>
    <dbReference type="NCBI Taxonomy" id="351627"/>
    <lineage>
        <taxon>Bacteria</taxon>
        <taxon>Bacillati</taxon>
        <taxon>Bacillota</taxon>
        <taxon>Bacillota incertae sedis</taxon>
        <taxon>Caldicellulosiruptorales</taxon>
        <taxon>Caldicellulosiruptoraceae</taxon>
        <taxon>Caldicellulosiruptor</taxon>
    </lineage>
</organism>
<protein>
    <recommendedName>
        <fullName evidence="1">ATP-dependent Clp protease ATP-binding subunit ClpX</fullName>
    </recommendedName>
</protein>
<name>CLPX_CALS8</name>
<reference key="1">
    <citation type="submission" date="2007-04" db="EMBL/GenBank/DDBJ databases">
        <title>Genome sequence of the thermophilic hydrogen-producing bacterium Caldicellulosiruptor saccharolyticus DSM 8903.</title>
        <authorList>
            <person name="Copeland A."/>
            <person name="Lucas S."/>
            <person name="Lapidus A."/>
            <person name="Barry K."/>
            <person name="Detter J.C."/>
            <person name="Glavina del Rio T."/>
            <person name="Hammon N."/>
            <person name="Israni S."/>
            <person name="Dalin E."/>
            <person name="Tice H."/>
            <person name="Pitluck S."/>
            <person name="Kiss H."/>
            <person name="Brettin T."/>
            <person name="Bruce D."/>
            <person name="Han C."/>
            <person name="Schmutz J."/>
            <person name="Larimer F."/>
            <person name="Land M."/>
            <person name="Hauser L."/>
            <person name="Kyrpides N."/>
            <person name="Lykidis A."/>
            <person name="van de Werken H.J.G."/>
            <person name="Verhaart M.R.A."/>
            <person name="VanFossen A.L."/>
            <person name="Lewis D.L."/>
            <person name="Nichols J.D."/>
            <person name="Goorissen H.P."/>
            <person name="van Niel E.W.J."/>
            <person name="Stams F.J.M."/>
            <person name="Willquist K.U."/>
            <person name="Ward D.E."/>
            <person name="van der Oost J."/>
            <person name="Kelly R.M."/>
            <person name="Kengen S.M.W."/>
            <person name="Richardson P."/>
        </authorList>
    </citation>
    <scope>NUCLEOTIDE SEQUENCE [LARGE SCALE GENOMIC DNA]</scope>
    <source>
        <strain>ATCC 43494 / DSM 8903 / Tp8T 6331</strain>
    </source>
</reference>
<comment type="function">
    <text evidence="1">ATP-dependent specificity component of the Clp protease. It directs the protease to specific substrates. Can perform chaperone functions in the absence of ClpP.</text>
</comment>
<comment type="subunit">
    <text evidence="1">Component of the ClpX-ClpP complex. Forms a hexameric ring that, in the presence of ATP, binds to fourteen ClpP subunits assembled into a disk-like structure with a central cavity, resembling the structure of eukaryotic proteasomes.</text>
</comment>
<comment type="similarity">
    <text evidence="1">Belongs to the ClpX chaperone family.</text>
</comment>
<dbReference type="EMBL" id="CP000679">
    <property type="protein sequence ID" value="ABP66496.1"/>
    <property type="molecule type" value="Genomic_DNA"/>
</dbReference>
<dbReference type="RefSeq" id="WP_011916442.1">
    <property type="nucleotide sequence ID" value="NC_009437.1"/>
</dbReference>
<dbReference type="SMR" id="A4XHW1"/>
<dbReference type="STRING" id="351627.Csac_0880"/>
<dbReference type="KEGG" id="csc:Csac_0880"/>
<dbReference type="eggNOG" id="COG1219">
    <property type="taxonomic scope" value="Bacteria"/>
</dbReference>
<dbReference type="HOGENOM" id="CLU_014218_8_2_9"/>
<dbReference type="OrthoDB" id="9804062at2"/>
<dbReference type="Proteomes" id="UP000000256">
    <property type="component" value="Chromosome"/>
</dbReference>
<dbReference type="GO" id="GO:0009376">
    <property type="term" value="C:HslUV protease complex"/>
    <property type="evidence" value="ECO:0007669"/>
    <property type="project" value="TreeGrafter"/>
</dbReference>
<dbReference type="GO" id="GO:0005524">
    <property type="term" value="F:ATP binding"/>
    <property type="evidence" value="ECO:0007669"/>
    <property type="project" value="UniProtKB-UniRule"/>
</dbReference>
<dbReference type="GO" id="GO:0016887">
    <property type="term" value="F:ATP hydrolysis activity"/>
    <property type="evidence" value="ECO:0007669"/>
    <property type="project" value="InterPro"/>
</dbReference>
<dbReference type="GO" id="GO:0140662">
    <property type="term" value="F:ATP-dependent protein folding chaperone"/>
    <property type="evidence" value="ECO:0007669"/>
    <property type="project" value="InterPro"/>
</dbReference>
<dbReference type="GO" id="GO:0046983">
    <property type="term" value="F:protein dimerization activity"/>
    <property type="evidence" value="ECO:0007669"/>
    <property type="project" value="InterPro"/>
</dbReference>
<dbReference type="GO" id="GO:0051082">
    <property type="term" value="F:unfolded protein binding"/>
    <property type="evidence" value="ECO:0007669"/>
    <property type="project" value="UniProtKB-UniRule"/>
</dbReference>
<dbReference type="GO" id="GO:0008270">
    <property type="term" value="F:zinc ion binding"/>
    <property type="evidence" value="ECO:0007669"/>
    <property type="project" value="InterPro"/>
</dbReference>
<dbReference type="GO" id="GO:0051301">
    <property type="term" value="P:cell division"/>
    <property type="evidence" value="ECO:0007669"/>
    <property type="project" value="TreeGrafter"/>
</dbReference>
<dbReference type="GO" id="GO:0051603">
    <property type="term" value="P:proteolysis involved in protein catabolic process"/>
    <property type="evidence" value="ECO:0007669"/>
    <property type="project" value="TreeGrafter"/>
</dbReference>
<dbReference type="CDD" id="cd19497">
    <property type="entry name" value="RecA-like_ClpX"/>
    <property type="match status" value="1"/>
</dbReference>
<dbReference type="FunFam" id="1.10.8.60:FF:000002">
    <property type="entry name" value="ATP-dependent Clp protease ATP-binding subunit ClpX"/>
    <property type="match status" value="1"/>
</dbReference>
<dbReference type="FunFam" id="3.40.50.300:FF:000005">
    <property type="entry name" value="ATP-dependent Clp protease ATP-binding subunit ClpX"/>
    <property type="match status" value="1"/>
</dbReference>
<dbReference type="Gene3D" id="1.10.8.60">
    <property type="match status" value="1"/>
</dbReference>
<dbReference type="Gene3D" id="6.20.220.10">
    <property type="entry name" value="ClpX chaperone, C4-type zinc finger domain"/>
    <property type="match status" value="1"/>
</dbReference>
<dbReference type="Gene3D" id="3.40.50.300">
    <property type="entry name" value="P-loop containing nucleotide triphosphate hydrolases"/>
    <property type="match status" value="1"/>
</dbReference>
<dbReference type="HAMAP" id="MF_00175">
    <property type="entry name" value="ClpX"/>
    <property type="match status" value="1"/>
</dbReference>
<dbReference type="InterPro" id="IPR003593">
    <property type="entry name" value="AAA+_ATPase"/>
</dbReference>
<dbReference type="InterPro" id="IPR050052">
    <property type="entry name" value="ATP-dep_Clp_protease_ClpX"/>
</dbReference>
<dbReference type="InterPro" id="IPR003959">
    <property type="entry name" value="ATPase_AAA_core"/>
</dbReference>
<dbReference type="InterPro" id="IPR019489">
    <property type="entry name" value="Clp_ATPase_C"/>
</dbReference>
<dbReference type="InterPro" id="IPR004487">
    <property type="entry name" value="Clp_protease_ATP-bd_su_ClpX"/>
</dbReference>
<dbReference type="InterPro" id="IPR046425">
    <property type="entry name" value="ClpX_bact"/>
</dbReference>
<dbReference type="InterPro" id="IPR027417">
    <property type="entry name" value="P-loop_NTPase"/>
</dbReference>
<dbReference type="InterPro" id="IPR010603">
    <property type="entry name" value="Znf_CppX_C4"/>
</dbReference>
<dbReference type="InterPro" id="IPR038366">
    <property type="entry name" value="Znf_CppX_C4_sf"/>
</dbReference>
<dbReference type="NCBIfam" id="TIGR00382">
    <property type="entry name" value="clpX"/>
    <property type="match status" value="1"/>
</dbReference>
<dbReference type="NCBIfam" id="NF003745">
    <property type="entry name" value="PRK05342.1"/>
    <property type="match status" value="1"/>
</dbReference>
<dbReference type="PANTHER" id="PTHR48102:SF7">
    <property type="entry name" value="ATP-DEPENDENT CLP PROTEASE ATP-BINDING SUBUNIT CLPX-LIKE, MITOCHONDRIAL"/>
    <property type="match status" value="1"/>
</dbReference>
<dbReference type="PANTHER" id="PTHR48102">
    <property type="entry name" value="ATP-DEPENDENT CLP PROTEASE ATP-BINDING SUBUNIT CLPX-LIKE, MITOCHONDRIAL-RELATED"/>
    <property type="match status" value="1"/>
</dbReference>
<dbReference type="Pfam" id="PF07724">
    <property type="entry name" value="AAA_2"/>
    <property type="match status" value="1"/>
</dbReference>
<dbReference type="Pfam" id="PF10431">
    <property type="entry name" value="ClpB_D2-small"/>
    <property type="match status" value="1"/>
</dbReference>
<dbReference type="Pfam" id="PF06689">
    <property type="entry name" value="zf-C4_ClpX"/>
    <property type="match status" value="1"/>
</dbReference>
<dbReference type="SMART" id="SM00382">
    <property type="entry name" value="AAA"/>
    <property type="match status" value="1"/>
</dbReference>
<dbReference type="SMART" id="SM01086">
    <property type="entry name" value="ClpB_D2-small"/>
    <property type="match status" value="1"/>
</dbReference>
<dbReference type="SMART" id="SM00994">
    <property type="entry name" value="zf-C4_ClpX"/>
    <property type="match status" value="1"/>
</dbReference>
<dbReference type="SUPFAM" id="SSF57716">
    <property type="entry name" value="Glucocorticoid receptor-like (DNA-binding domain)"/>
    <property type="match status" value="1"/>
</dbReference>
<dbReference type="SUPFAM" id="SSF52540">
    <property type="entry name" value="P-loop containing nucleoside triphosphate hydrolases"/>
    <property type="match status" value="1"/>
</dbReference>
<dbReference type="PROSITE" id="PS51902">
    <property type="entry name" value="CLPX_ZB"/>
    <property type="match status" value="1"/>
</dbReference>
<feature type="chain" id="PRO_1000024537" description="ATP-dependent Clp protease ATP-binding subunit ClpX">
    <location>
        <begin position="1"/>
        <end position="433"/>
    </location>
</feature>
<feature type="domain" description="ClpX-type ZB" evidence="2">
    <location>
        <begin position="1"/>
        <end position="53"/>
    </location>
</feature>
<feature type="binding site" evidence="2">
    <location>
        <position position="12"/>
    </location>
    <ligand>
        <name>Zn(2+)</name>
        <dbReference type="ChEBI" id="CHEBI:29105"/>
    </ligand>
</feature>
<feature type="binding site" evidence="2">
    <location>
        <position position="15"/>
    </location>
    <ligand>
        <name>Zn(2+)</name>
        <dbReference type="ChEBI" id="CHEBI:29105"/>
    </ligand>
</feature>
<feature type="binding site" evidence="2">
    <location>
        <position position="34"/>
    </location>
    <ligand>
        <name>Zn(2+)</name>
        <dbReference type="ChEBI" id="CHEBI:29105"/>
    </ligand>
</feature>
<feature type="binding site" evidence="2">
    <location>
        <position position="37"/>
    </location>
    <ligand>
        <name>Zn(2+)</name>
        <dbReference type="ChEBI" id="CHEBI:29105"/>
    </ligand>
</feature>
<feature type="binding site" evidence="1">
    <location>
        <begin position="118"/>
        <end position="125"/>
    </location>
    <ligand>
        <name>ATP</name>
        <dbReference type="ChEBI" id="CHEBI:30616"/>
    </ligand>
</feature>
<sequence length="433" mass="49143">MAKFDEKKTLRCSFCGKSQDEVRRLVAGPGVYICDECVELCSEIISEEFEEEEYNEFDDRLPTPKEIKEFLDQYVVGQDHAKKILSVAVYNHYKRIYYHDNRKDDVEIQKSNILMLGPTGSGKTYLAQTLAKMLNVPFAIADATTLTEAGYVGEDVENILLRLIQNADYDIERAERGIVYIDEIDKIARKSDNPSITRDVSGEGVQQALLKILEGTIASVPPQGGRKHPHQEFIQIDTTNILFICGGAFEGIEKIIERRIGEKTLGFNAKIESKKEKKIGDILRQIMPQDLLKFGMIPEFIGRVPIIVTLDALDKEALIKILTEPKNALVKQYQKLFAMDGVELEFEKEALEAIADKAIERNTGARGLRAIMEEIMLDVMFEIPSNDKIEKVIITKAAVLKEDKPIVIINENKKVQRKPRLKQRLQERRGNVS</sequence>
<keyword id="KW-0067">ATP-binding</keyword>
<keyword id="KW-0143">Chaperone</keyword>
<keyword id="KW-0479">Metal-binding</keyword>
<keyword id="KW-0547">Nucleotide-binding</keyword>
<keyword id="KW-0862">Zinc</keyword>
<accession>A4XHW1</accession>
<gene>
    <name evidence="1" type="primary">clpX</name>
    <name type="ordered locus">Csac_0880</name>
</gene>
<evidence type="ECO:0000255" key="1">
    <source>
        <dbReference type="HAMAP-Rule" id="MF_00175"/>
    </source>
</evidence>
<evidence type="ECO:0000255" key="2">
    <source>
        <dbReference type="PROSITE-ProRule" id="PRU01250"/>
    </source>
</evidence>
<proteinExistence type="inferred from homology"/>